<comment type="function">
    <text evidence="1">Digests double-stranded RNA. Involved in the processing of primary rRNA transcript to yield the immediate precursors to the large and small rRNAs (23S and 16S). Processes some mRNAs, and tRNAs when they are encoded in the rRNA operon. Processes pre-crRNA and tracrRNA of type II CRISPR loci if present in the organism (By similarity).</text>
</comment>
<comment type="catalytic activity">
    <reaction>
        <text>Endonucleolytic cleavage to 5'-phosphomonoester.</text>
        <dbReference type="EC" id="3.1.26.3"/>
    </reaction>
</comment>
<comment type="cofactor">
    <cofactor evidence="1">
        <name>Mg(2+)</name>
        <dbReference type="ChEBI" id="CHEBI:18420"/>
    </cofactor>
</comment>
<comment type="subunit">
    <text evidence="1">Homodimer.</text>
</comment>
<comment type="subcellular location">
    <subcellularLocation>
        <location evidence="1">Cytoplasm</location>
    </subcellularLocation>
</comment>
<comment type="similarity">
    <text evidence="3">Belongs to the ribonuclease III family.</text>
</comment>
<comment type="sequence caution" evidence="3">
    <conflict type="erroneous initiation">
        <sequence resource="EMBL-CDS" id="ADF50640"/>
    </conflict>
    <text>Truncated N-terminus.</text>
</comment>
<organism>
    <name type="scientific">Zunongwangia profunda (strain DSM 18752 / CCTCC AB 206139 / SM-A87)</name>
    <name type="common">Wangia profunda</name>
    <dbReference type="NCBI Taxonomy" id="655815"/>
    <lineage>
        <taxon>Bacteria</taxon>
        <taxon>Pseudomonadati</taxon>
        <taxon>Bacteroidota</taxon>
        <taxon>Flavobacteriia</taxon>
        <taxon>Flavobacteriales</taxon>
        <taxon>Flavobacteriaceae</taxon>
        <taxon>Zunongwangia</taxon>
    </lineage>
</organism>
<feature type="chain" id="PRO_0000416615" description="Ribonuclease 3">
    <location>
        <begin position="1"/>
        <end position="243"/>
    </location>
</feature>
<feature type="domain" description="RNase III">
    <location>
        <begin position="19"/>
        <end position="144"/>
    </location>
</feature>
<feature type="domain" description="DRBM">
    <location>
        <begin position="172"/>
        <end position="240"/>
    </location>
</feature>
<feature type="active site" evidence="2">
    <location>
        <position position="65"/>
    </location>
</feature>
<feature type="active site" evidence="1">
    <location>
        <position position="133"/>
    </location>
</feature>
<feature type="binding site" evidence="1">
    <location>
        <position position="61"/>
    </location>
    <ligand>
        <name>Mg(2+)</name>
        <dbReference type="ChEBI" id="CHEBI:18420"/>
    </ligand>
</feature>
<feature type="binding site" evidence="1">
    <location>
        <position position="130"/>
    </location>
    <ligand>
        <name>Mg(2+)</name>
        <dbReference type="ChEBI" id="CHEBI:18420"/>
    </ligand>
</feature>
<feature type="binding site" evidence="1">
    <location>
        <position position="133"/>
    </location>
    <ligand>
        <name>Mg(2+)</name>
        <dbReference type="ChEBI" id="CHEBI:18420"/>
    </ligand>
</feature>
<name>RNC_ZUNPS</name>
<accession>D5BDP9</accession>
<protein>
    <recommendedName>
        <fullName>Ribonuclease 3</fullName>
        <ecNumber>3.1.26.3</ecNumber>
    </recommendedName>
    <alternativeName>
        <fullName>Ribonuclease III</fullName>
        <shortName>RNase III</shortName>
    </alternativeName>
</protein>
<gene>
    <name type="primary">rnc</name>
    <name type="ordered locus">ZPR_0280</name>
</gene>
<sequence length="243" mass="28210">MSVIRNILNSRSSKGGNFFNTLHKLLGFRPKDLSVYERAFTHRSLNVKDPSGNPINYERLEFLGDAMLGSVIASHLYQEVPEGDEGYLTKMRSKIVSRKHLNELGKDLNLIRFVKSNIPNDQFGVNIHGNIFEALVGAIYLDRGYKYCNRFIYNRVIEPYVDIETLEGRVISYKSLLIEWCQKQKKEFNYQVYEDTGRDELKHFAVKLWIDKKVIAKARATSKKKAEEKASKRAYYALQNKMN</sequence>
<reference key="1">
    <citation type="journal article" date="2010" name="BMC Genomics">
        <title>The complete genome of Zunongwangia profunda SM-A87 reveals its adaptation to the deep-sea environment and ecological role in sedimentary organic nitrogen degradation.</title>
        <authorList>
            <person name="Qin Q.L."/>
            <person name="Zhang X.Y."/>
            <person name="Wang X.M."/>
            <person name="Liu G.M."/>
            <person name="Chen X.L."/>
            <person name="Xie B.B."/>
            <person name="Dang H.Y."/>
            <person name="Zhou B.C."/>
            <person name="Yu J."/>
            <person name="Zhang Y.Z."/>
        </authorList>
    </citation>
    <scope>NUCLEOTIDE SEQUENCE [LARGE SCALE GENOMIC DNA]</scope>
    <source>
        <strain>DSM 18752 / CCTCC AB 206139 / SM-A87</strain>
    </source>
</reference>
<evidence type="ECO:0000250" key="1"/>
<evidence type="ECO:0000255" key="2"/>
<evidence type="ECO:0000305" key="3"/>
<dbReference type="EC" id="3.1.26.3"/>
<dbReference type="EMBL" id="CP001650">
    <property type="protein sequence ID" value="ADF50640.1"/>
    <property type="status" value="ALT_INIT"/>
    <property type="molecule type" value="Genomic_DNA"/>
</dbReference>
<dbReference type="RefSeq" id="WP_041578507.1">
    <property type="nucleotide sequence ID" value="NC_014041.1"/>
</dbReference>
<dbReference type="SMR" id="D5BDP9"/>
<dbReference type="STRING" id="655815.ZPR_0280"/>
<dbReference type="KEGG" id="zpr:ZPR_0280"/>
<dbReference type="eggNOG" id="COG0571">
    <property type="taxonomic scope" value="Bacteria"/>
</dbReference>
<dbReference type="HOGENOM" id="CLU_000907_1_0_10"/>
<dbReference type="OrthoDB" id="9805026at2"/>
<dbReference type="Proteomes" id="UP000001654">
    <property type="component" value="Chromosome"/>
</dbReference>
<dbReference type="GO" id="GO:0005737">
    <property type="term" value="C:cytoplasm"/>
    <property type="evidence" value="ECO:0007669"/>
    <property type="project" value="UniProtKB-SubCell"/>
</dbReference>
<dbReference type="GO" id="GO:0003725">
    <property type="term" value="F:double-stranded RNA binding"/>
    <property type="evidence" value="ECO:0007669"/>
    <property type="project" value="TreeGrafter"/>
</dbReference>
<dbReference type="GO" id="GO:0046872">
    <property type="term" value="F:metal ion binding"/>
    <property type="evidence" value="ECO:0007669"/>
    <property type="project" value="UniProtKB-KW"/>
</dbReference>
<dbReference type="GO" id="GO:0004525">
    <property type="term" value="F:ribonuclease III activity"/>
    <property type="evidence" value="ECO:0007669"/>
    <property type="project" value="UniProtKB-UniRule"/>
</dbReference>
<dbReference type="GO" id="GO:0019843">
    <property type="term" value="F:rRNA binding"/>
    <property type="evidence" value="ECO:0007669"/>
    <property type="project" value="UniProtKB-KW"/>
</dbReference>
<dbReference type="GO" id="GO:0006397">
    <property type="term" value="P:mRNA processing"/>
    <property type="evidence" value="ECO:0007669"/>
    <property type="project" value="UniProtKB-UniRule"/>
</dbReference>
<dbReference type="GO" id="GO:0010468">
    <property type="term" value="P:regulation of gene expression"/>
    <property type="evidence" value="ECO:0007669"/>
    <property type="project" value="TreeGrafter"/>
</dbReference>
<dbReference type="GO" id="GO:0006364">
    <property type="term" value="P:rRNA processing"/>
    <property type="evidence" value="ECO:0007669"/>
    <property type="project" value="UniProtKB-UniRule"/>
</dbReference>
<dbReference type="GO" id="GO:0008033">
    <property type="term" value="P:tRNA processing"/>
    <property type="evidence" value="ECO:0007669"/>
    <property type="project" value="UniProtKB-KW"/>
</dbReference>
<dbReference type="CDD" id="cd00593">
    <property type="entry name" value="RIBOc"/>
    <property type="match status" value="1"/>
</dbReference>
<dbReference type="Gene3D" id="3.30.160.20">
    <property type="match status" value="1"/>
</dbReference>
<dbReference type="Gene3D" id="1.10.1520.10">
    <property type="entry name" value="Ribonuclease III domain"/>
    <property type="match status" value="1"/>
</dbReference>
<dbReference type="HAMAP" id="MF_00104">
    <property type="entry name" value="RNase_III"/>
    <property type="match status" value="1"/>
</dbReference>
<dbReference type="InterPro" id="IPR014720">
    <property type="entry name" value="dsRBD_dom"/>
</dbReference>
<dbReference type="InterPro" id="IPR011907">
    <property type="entry name" value="RNase_III"/>
</dbReference>
<dbReference type="InterPro" id="IPR000999">
    <property type="entry name" value="RNase_III_dom"/>
</dbReference>
<dbReference type="InterPro" id="IPR036389">
    <property type="entry name" value="RNase_III_sf"/>
</dbReference>
<dbReference type="NCBIfam" id="TIGR02191">
    <property type="entry name" value="RNaseIII"/>
    <property type="match status" value="1"/>
</dbReference>
<dbReference type="PANTHER" id="PTHR11207:SF0">
    <property type="entry name" value="RIBONUCLEASE 3"/>
    <property type="match status" value="1"/>
</dbReference>
<dbReference type="PANTHER" id="PTHR11207">
    <property type="entry name" value="RIBONUCLEASE III"/>
    <property type="match status" value="1"/>
</dbReference>
<dbReference type="Pfam" id="PF00035">
    <property type="entry name" value="dsrm"/>
    <property type="match status" value="1"/>
</dbReference>
<dbReference type="Pfam" id="PF14622">
    <property type="entry name" value="Ribonucleas_3_3"/>
    <property type="match status" value="1"/>
</dbReference>
<dbReference type="SMART" id="SM00358">
    <property type="entry name" value="DSRM"/>
    <property type="match status" value="1"/>
</dbReference>
<dbReference type="SMART" id="SM00535">
    <property type="entry name" value="RIBOc"/>
    <property type="match status" value="1"/>
</dbReference>
<dbReference type="SUPFAM" id="SSF54768">
    <property type="entry name" value="dsRNA-binding domain-like"/>
    <property type="match status" value="1"/>
</dbReference>
<dbReference type="SUPFAM" id="SSF69065">
    <property type="entry name" value="RNase III domain-like"/>
    <property type="match status" value="1"/>
</dbReference>
<dbReference type="PROSITE" id="PS50137">
    <property type="entry name" value="DS_RBD"/>
    <property type="match status" value="1"/>
</dbReference>
<dbReference type="PROSITE" id="PS00517">
    <property type="entry name" value="RNASE_3_1"/>
    <property type="match status" value="1"/>
</dbReference>
<dbReference type="PROSITE" id="PS50142">
    <property type="entry name" value="RNASE_3_2"/>
    <property type="match status" value="1"/>
</dbReference>
<keyword id="KW-0963">Cytoplasm</keyword>
<keyword id="KW-0255">Endonuclease</keyword>
<keyword id="KW-0378">Hydrolase</keyword>
<keyword id="KW-0460">Magnesium</keyword>
<keyword id="KW-0479">Metal-binding</keyword>
<keyword id="KW-0507">mRNA processing</keyword>
<keyword id="KW-0540">Nuclease</keyword>
<keyword id="KW-0694">RNA-binding</keyword>
<keyword id="KW-0698">rRNA processing</keyword>
<keyword id="KW-0699">rRNA-binding</keyword>
<keyword id="KW-0819">tRNA processing</keyword>
<proteinExistence type="inferred from homology"/>